<dbReference type="EC" id="6.1.1.16" evidence="1"/>
<dbReference type="EMBL" id="CP000473">
    <property type="protein sequence ID" value="ABJ84226.1"/>
    <property type="molecule type" value="Genomic_DNA"/>
</dbReference>
<dbReference type="SMR" id="Q021Y7"/>
<dbReference type="FunCoup" id="Q021Y7">
    <property type="interactions" value="568"/>
</dbReference>
<dbReference type="STRING" id="234267.Acid_3249"/>
<dbReference type="KEGG" id="sus:Acid_3249"/>
<dbReference type="eggNOG" id="COG0215">
    <property type="taxonomic scope" value="Bacteria"/>
</dbReference>
<dbReference type="HOGENOM" id="CLU_013528_0_1_0"/>
<dbReference type="InParanoid" id="Q021Y7"/>
<dbReference type="OrthoDB" id="9815130at2"/>
<dbReference type="GO" id="GO:0005829">
    <property type="term" value="C:cytosol"/>
    <property type="evidence" value="ECO:0007669"/>
    <property type="project" value="TreeGrafter"/>
</dbReference>
<dbReference type="GO" id="GO:0005524">
    <property type="term" value="F:ATP binding"/>
    <property type="evidence" value="ECO:0007669"/>
    <property type="project" value="UniProtKB-UniRule"/>
</dbReference>
<dbReference type="GO" id="GO:0004817">
    <property type="term" value="F:cysteine-tRNA ligase activity"/>
    <property type="evidence" value="ECO:0007669"/>
    <property type="project" value="UniProtKB-UniRule"/>
</dbReference>
<dbReference type="GO" id="GO:0008270">
    <property type="term" value="F:zinc ion binding"/>
    <property type="evidence" value="ECO:0007669"/>
    <property type="project" value="UniProtKB-UniRule"/>
</dbReference>
<dbReference type="GO" id="GO:0006423">
    <property type="term" value="P:cysteinyl-tRNA aminoacylation"/>
    <property type="evidence" value="ECO:0007669"/>
    <property type="project" value="UniProtKB-UniRule"/>
</dbReference>
<dbReference type="CDD" id="cd00672">
    <property type="entry name" value="CysRS_core"/>
    <property type="match status" value="1"/>
</dbReference>
<dbReference type="FunFam" id="3.40.50.620:FF:000130">
    <property type="entry name" value="Cysteine--tRNA ligase"/>
    <property type="match status" value="1"/>
</dbReference>
<dbReference type="Gene3D" id="1.20.120.1910">
    <property type="entry name" value="Cysteine-tRNA ligase, C-terminal anti-codon recognition domain"/>
    <property type="match status" value="1"/>
</dbReference>
<dbReference type="Gene3D" id="3.40.50.620">
    <property type="entry name" value="HUPs"/>
    <property type="match status" value="1"/>
</dbReference>
<dbReference type="HAMAP" id="MF_00041">
    <property type="entry name" value="Cys_tRNA_synth"/>
    <property type="match status" value="1"/>
</dbReference>
<dbReference type="InterPro" id="IPR015803">
    <property type="entry name" value="Cys-tRNA-ligase"/>
</dbReference>
<dbReference type="InterPro" id="IPR015273">
    <property type="entry name" value="Cys-tRNA-synt_Ia_DALR"/>
</dbReference>
<dbReference type="InterPro" id="IPR024909">
    <property type="entry name" value="Cys-tRNA/MSH_ligase"/>
</dbReference>
<dbReference type="InterPro" id="IPR014729">
    <property type="entry name" value="Rossmann-like_a/b/a_fold"/>
</dbReference>
<dbReference type="InterPro" id="IPR032678">
    <property type="entry name" value="tRNA-synt_1_cat_dom"/>
</dbReference>
<dbReference type="InterPro" id="IPR009080">
    <property type="entry name" value="tRNAsynth_Ia_anticodon-bd"/>
</dbReference>
<dbReference type="NCBIfam" id="TIGR00435">
    <property type="entry name" value="cysS"/>
    <property type="match status" value="1"/>
</dbReference>
<dbReference type="PANTHER" id="PTHR10890:SF3">
    <property type="entry name" value="CYSTEINE--TRNA LIGASE, CYTOPLASMIC"/>
    <property type="match status" value="1"/>
</dbReference>
<dbReference type="PANTHER" id="PTHR10890">
    <property type="entry name" value="CYSTEINYL-TRNA SYNTHETASE"/>
    <property type="match status" value="1"/>
</dbReference>
<dbReference type="Pfam" id="PF09190">
    <property type="entry name" value="DALR_2"/>
    <property type="match status" value="1"/>
</dbReference>
<dbReference type="Pfam" id="PF01406">
    <property type="entry name" value="tRNA-synt_1e"/>
    <property type="match status" value="1"/>
</dbReference>
<dbReference type="PRINTS" id="PR00983">
    <property type="entry name" value="TRNASYNTHCYS"/>
</dbReference>
<dbReference type="SUPFAM" id="SSF47323">
    <property type="entry name" value="Anticodon-binding domain of a subclass of class I aminoacyl-tRNA synthetases"/>
    <property type="match status" value="1"/>
</dbReference>
<dbReference type="SUPFAM" id="SSF52374">
    <property type="entry name" value="Nucleotidylyl transferase"/>
    <property type="match status" value="1"/>
</dbReference>
<protein>
    <recommendedName>
        <fullName evidence="1">Cysteine--tRNA ligase</fullName>
        <ecNumber evidence="1">6.1.1.16</ecNumber>
    </recommendedName>
    <alternativeName>
        <fullName evidence="1">Cysteinyl-tRNA synthetase</fullName>
        <shortName evidence="1">CysRS</shortName>
    </alternativeName>
</protein>
<name>SYC_SOLUE</name>
<organism>
    <name type="scientific">Solibacter usitatus (strain Ellin6076)</name>
    <dbReference type="NCBI Taxonomy" id="234267"/>
    <lineage>
        <taxon>Bacteria</taxon>
        <taxon>Pseudomonadati</taxon>
        <taxon>Acidobacteriota</taxon>
        <taxon>Terriglobia</taxon>
        <taxon>Bryobacterales</taxon>
        <taxon>Solibacteraceae</taxon>
        <taxon>Candidatus Solibacter</taxon>
    </lineage>
</organism>
<evidence type="ECO:0000255" key="1">
    <source>
        <dbReference type="HAMAP-Rule" id="MF_00041"/>
    </source>
</evidence>
<keyword id="KW-0030">Aminoacyl-tRNA synthetase</keyword>
<keyword id="KW-0067">ATP-binding</keyword>
<keyword id="KW-0963">Cytoplasm</keyword>
<keyword id="KW-0436">Ligase</keyword>
<keyword id="KW-0479">Metal-binding</keyword>
<keyword id="KW-0547">Nucleotide-binding</keyword>
<keyword id="KW-0648">Protein biosynthesis</keyword>
<keyword id="KW-0862">Zinc</keyword>
<accession>Q021Y7</accession>
<gene>
    <name evidence="1" type="primary">cysS</name>
    <name type="ordered locus">Acid_3249</name>
</gene>
<feature type="chain" id="PRO_1000006613" description="Cysteine--tRNA ligase">
    <location>
        <begin position="1"/>
        <end position="466"/>
    </location>
</feature>
<feature type="short sequence motif" description="'HIGH' region">
    <location>
        <begin position="31"/>
        <end position="41"/>
    </location>
</feature>
<feature type="short sequence motif" description="'KMSKS' region">
    <location>
        <begin position="267"/>
        <end position="271"/>
    </location>
</feature>
<feature type="binding site" evidence="1">
    <location>
        <position position="29"/>
    </location>
    <ligand>
        <name>Zn(2+)</name>
        <dbReference type="ChEBI" id="CHEBI:29105"/>
    </ligand>
</feature>
<feature type="binding site" evidence="1">
    <location>
        <position position="210"/>
    </location>
    <ligand>
        <name>Zn(2+)</name>
        <dbReference type="ChEBI" id="CHEBI:29105"/>
    </ligand>
</feature>
<feature type="binding site" evidence="1">
    <location>
        <position position="235"/>
    </location>
    <ligand>
        <name>Zn(2+)</name>
        <dbReference type="ChEBI" id="CHEBI:29105"/>
    </ligand>
</feature>
<feature type="binding site" evidence="1">
    <location>
        <position position="239"/>
    </location>
    <ligand>
        <name>Zn(2+)</name>
        <dbReference type="ChEBI" id="CHEBI:29105"/>
    </ligand>
</feature>
<feature type="binding site" evidence="1">
    <location>
        <position position="270"/>
    </location>
    <ligand>
        <name>ATP</name>
        <dbReference type="ChEBI" id="CHEBI:30616"/>
    </ligand>
</feature>
<reference key="1">
    <citation type="journal article" date="2009" name="Appl. Environ. Microbiol.">
        <title>Three genomes from the phylum Acidobacteria provide insight into the lifestyles of these microorganisms in soils.</title>
        <authorList>
            <person name="Ward N.L."/>
            <person name="Challacombe J.F."/>
            <person name="Janssen P.H."/>
            <person name="Henrissat B."/>
            <person name="Coutinho P.M."/>
            <person name="Wu M."/>
            <person name="Xie G."/>
            <person name="Haft D.H."/>
            <person name="Sait M."/>
            <person name="Badger J."/>
            <person name="Barabote R.D."/>
            <person name="Bradley B."/>
            <person name="Brettin T.S."/>
            <person name="Brinkac L.M."/>
            <person name="Bruce D."/>
            <person name="Creasy T."/>
            <person name="Daugherty S.C."/>
            <person name="Davidsen T.M."/>
            <person name="DeBoy R.T."/>
            <person name="Detter J.C."/>
            <person name="Dodson R.J."/>
            <person name="Durkin A.S."/>
            <person name="Ganapathy A."/>
            <person name="Gwinn-Giglio M."/>
            <person name="Han C.S."/>
            <person name="Khouri H."/>
            <person name="Kiss H."/>
            <person name="Kothari S.P."/>
            <person name="Madupu R."/>
            <person name="Nelson K.E."/>
            <person name="Nelson W.C."/>
            <person name="Paulsen I."/>
            <person name="Penn K."/>
            <person name="Ren Q."/>
            <person name="Rosovitz M.J."/>
            <person name="Selengut J.D."/>
            <person name="Shrivastava S."/>
            <person name="Sullivan S.A."/>
            <person name="Tapia R."/>
            <person name="Thompson L.S."/>
            <person name="Watkins K.L."/>
            <person name="Yang Q."/>
            <person name="Yu C."/>
            <person name="Zafar N."/>
            <person name="Zhou L."/>
            <person name="Kuske C.R."/>
        </authorList>
    </citation>
    <scope>NUCLEOTIDE SEQUENCE [LARGE SCALE GENOMIC DNA]</scope>
    <source>
        <strain>Ellin6076</strain>
    </source>
</reference>
<proteinExistence type="inferred from homology"/>
<comment type="catalytic activity">
    <reaction evidence="1">
        <text>tRNA(Cys) + L-cysteine + ATP = L-cysteinyl-tRNA(Cys) + AMP + diphosphate</text>
        <dbReference type="Rhea" id="RHEA:17773"/>
        <dbReference type="Rhea" id="RHEA-COMP:9661"/>
        <dbReference type="Rhea" id="RHEA-COMP:9679"/>
        <dbReference type="ChEBI" id="CHEBI:30616"/>
        <dbReference type="ChEBI" id="CHEBI:33019"/>
        <dbReference type="ChEBI" id="CHEBI:35235"/>
        <dbReference type="ChEBI" id="CHEBI:78442"/>
        <dbReference type="ChEBI" id="CHEBI:78517"/>
        <dbReference type="ChEBI" id="CHEBI:456215"/>
        <dbReference type="EC" id="6.1.1.16"/>
    </reaction>
</comment>
<comment type="cofactor">
    <cofactor evidence="1">
        <name>Zn(2+)</name>
        <dbReference type="ChEBI" id="CHEBI:29105"/>
    </cofactor>
    <text evidence="1">Binds 1 zinc ion per subunit.</text>
</comment>
<comment type="subunit">
    <text evidence="1">Monomer.</text>
</comment>
<comment type="subcellular location">
    <subcellularLocation>
        <location evidence="1">Cytoplasm</location>
    </subcellularLocation>
</comment>
<comment type="similarity">
    <text evidence="1">Belongs to the class-I aminoacyl-tRNA synthetase family.</text>
</comment>
<sequence>MALRFYNTLSQQVEEFTPASDNTVRMYTCGPTVYDFAHIGNFRTFTFVDLLRKVLRANGFQLNHVMNITDVDDKIIRNAVAQHQSLEQYTKIYTEAFLEDCKMLRLERPERIAPATEHIHDMVSAIERLGDSQHTYASDGSVYFKIASFPGYGKLSHNDFSGNLAGARVDVDEYEKADARDFALWKTPKEGEPFWDTTIGPGRPGWHIECSVMAIKYLGETLDIHAGGIDLVFPHHENEIAQSESLTGKLFSRFWLHAEFLMVEGQKMSKSLGNYYTLRDLVAKGYEPESIRYLLASVPYRKSLNFTLDGLKAARIAIERLRNFKRRLETEPFAEGLSAILAERTAQASQAFIGGLNEDLNTAEALASVFEYVRDLNSAMDSGEFRAGNTTAALEFLARFDSIFDVLKPTAKAGELSDAEIDAQIAARAAAKKSRDFALADQIRDQLLAQGIILEDTKSGVRWKRK</sequence>